<comment type="function">
    <text evidence="1">Quinone reductase that provides resistance to thiol-specific stress caused by electrophilic quinones.</text>
</comment>
<comment type="function">
    <text evidence="1">Also exhibits azoreductase activity. Catalyzes the reductive cleavage of the azo bond in aromatic azo compounds to the corresponding amines.</text>
</comment>
<comment type="catalytic activity">
    <reaction evidence="1">
        <text>2 a quinone + NADH + H(+) = 2 a 1,4-benzosemiquinone + NAD(+)</text>
        <dbReference type="Rhea" id="RHEA:65952"/>
        <dbReference type="ChEBI" id="CHEBI:15378"/>
        <dbReference type="ChEBI" id="CHEBI:57540"/>
        <dbReference type="ChEBI" id="CHEBI:57945"/>
        <dbReference type="ChEBI" id="CHEBI:132124"/>
        <dbReference type="ChEBI" id="CHEBI:134225"/>
    </reaction>
</comment>
<comment type="catalytic activity">
    <reaction evidence="1">
        <text>N,N-dimethyl-1,4-phenylenediamine + anthranilate + 2 NAD(+) = 2-(4-dimethylaminophenyl)diazenylbenzoate + 2 NADH + 2 H(+)</text>
        <dbReference type="Rhea" id="RHEA:55872"/>
        <dbReference type="ChEBI" id="CHEBI:15378"/>
        <dbReference type="ChEBI" id="CHEBI:15783"/>
        <dbReference type="ChEBI" id="CHEBI:16567"/>
        <dbReference type="ChEBI" id="CHEBI:57540"/>
        <dbReference type="ChEBI" id="CHEBI:57945"/>
        <dbReference type="ChEBI" id="CHEBI:71579"/>
        <dbReference type="EC" id="1.7.1.17"/>
    </reaction>
</comment>
<comment type="cofactor">
    <cofactor evidence="1">
        <name>FMN</name>
        <dbReference type="ChEBI" id="CHEBI:58210"/>
    </cofactor>
    <text evidence="1">Binds 1 FMN per subunit.</text>
</comment>
<comment type="subunit">
    <text evidence="1">Homodimer.</text>
</comment>
<comment type="similarity">
    <text evidence="1">Belongs to the azoreductase type 1 family.</text>
</comment>
<accession>Q39M29</accession>
<organism>
    <name type="scientific">Burkholderia lata (strain ATCC 17760 / DSM 23089 / LMG 22485 / NCIMB 9086 / R18194 / 383)</name>
    <dbReference type="NCBI Taxonomy" id="482957"/>
    <lineage>
        <taxon>Bacteria</taxon>
        <taxon>Pseudomonadati</taxon>
        <taxon>Pseudomonadota</taxon>
        <taxon>Betaproteobacteria</taxon>
        <taxon>Burkholderiales</taxon>
        <taxon>Burkholderiaceae</taxon>
        <taxon>Burkholderia</taxon>
        <taxon>Burkholderia cepacia complex</taxon>
    </lineage>
</organism>
<feature type="chain" id="PRO_0000245908" description="FMN-dependent NADH:quinone oxidoreductase 8">
    <location>
        <begin position="1"/>
        <end position="210"/>
    </location>
</feature>
<feature type="binding site" evidence="1">
    <location>
        <position position="10"/>
    </location>
    <ligand>
        <name>FMN</name>
        <dbReference type="ChEBI" id="CHEBI:58210"/>
    </ligand>
</feature>
<feature type="binding site" evidence="1">
    <location>
        <begin position="16"/>
        <end position="18"/>
    </location>
    <ligand>
        <name>FMN</name>
        <dbReference type="ChEBI" id="CHEBI:58210"/>
    </ligand>
</feature>
<reference key="1">
    <citation type="submission" date="2005-10" db="EMBL/GenBank/DDBJ databases">
        <title>Complete sequence of chromosome 3 of Burkholderia sp. 383.</title>
        <authorList>
            <consortium name="US DOE Joint Genome Institute"/>
            <person name="Copeland A."/>
            <person name="Lucas S."/>
            <person name="Lapidus A."/>
            <person name="Barry K."/>
            <person name="Detter J.C."/>
            <person name="Glavina T."/>
            <person name="Hammon N."/>
            <person name="Israni S."/>
            <person name="Pitluck S."/>
            <person name="Chain P."/>
            <person name="Malfatti S."/>
            <person name="Shin M."/>
            <person name="Vergez L."/>
            <person name="Schmutz J."/>
            <person name="Larimer F."/>
            <person name="Land M."/>
            <person name="Kyrpides N."/>
            <person name="Lykidis A."/>
            <person name="Richardson P."/>
        </authorList>
    </citation>
    <scope>NUCLEOTIDE SEQUENCE [LARGE SCALE GENOMIC DNA]</scope>
    <source>
        <strain>ATCC 17760 / DSM 23089 / LMG 22485 / NCIMB 9086 / R18194 / 383</strain>
    </source>
</reference>
<sequence length="210" mass="22942">MPTLLVVEASPRGEQSISRGLTKMFVNQWKREQHDGRVIQRDLMATDLPFVTMPWLGAYFTPPEHQTQDMKNLLRLSDELVAEILSADHIVIGTPVYNYNVPAVLKAYIDHIVRKGKTLGFSGEGLVKGKACTIVMASGGAYTPDSPIRDRDIATGYLRLILKVIGIEDVTVIAGGNAKAVDMGEISRSDFLEAFASDMADAAARPVVQV</sequence>
<gene>
    <name evidence="1" type="primary">azoR8</name>
    <name type="ordered locus">Bcep18194_C7443</name>
</gene>
<name>AZOR8_BURL3</name>
<keyword id="KW-0285">Flavoprotein</keyword>
<keyword id="KW-0288">FMN</keyword>
<keyword id="KW-0520">NAD</keyword>
<keyword id="KW-0560">Oxidoreductase</keyword>
<evidence type="ECO:0000255" key="1">
    <source>
        <dbReference type="HAMAP-Rule" id="MF_01216"/>
    </source>
</evidence>
<dbReference type="EC" id="1.6.5.-" evidence="1"/>
<dbReference type="EC" id="1.7.1.17" evidence="1"/>
<dbReference type="EMBL" id="CP000150">
    <property type="protein sequence ID" value="ABB06487.1"/>
    <property type="molecule type" value="Genomic_DNA"/>
</dbReference>
<dbReference type="RefSeq" id="WP_011350130.1">
    <property type="nucleotide sequence ID" value="NC_007509.1"/>
</dbReference>
<dbReference type="SMR" id="Q39M29"/>
<dbReference type="GeneID" id="45092811"/>
<dbReference type="KEGG" id="bur:Bcep18194_C7443"/>
<dbReference type="PATRIC" id="fig|482957.22.peg.8040"/>
<dbReference type="HOGENOM" id="CLU_088964_0_0_4"/>
<dbReference type="Proteomes" id="UP000002705">
    <property type="component" value="Chromosome 3"/>
</dbReference>
<dbReference type="GO" id="GO:0009055">
    <property type="term" value="F:electron transfer activity"/>
    <property type="evidence" value="ECO:0007669"/>
    <property type="project" value="UniProtKB-UniRule"/>
</dbReference>
<dbReference type="GO" id="GO:0010181">
    <property type="term" value="F:FMN binding"/>
    <property type="evidence" value="ECO:0007669"/>
    <property type="project" value="UniProtKB-UniRule"/>
</dbReference>
<dbReference type="GO" id="GO:0016652">
    <property type="term" value="F:oxidoreductase activity, acting on NAD(P)H as acceptor"/>
    <property type="evidence" value="ECO:0007669"/>
    <property type="project" value="UniProtKB-UniRule"/>
</dbReference>
<dbReference type="GO" id="GO:0016655">
    <property type="term" value="F:oxidoreductase activity, acting on NAD(P)H, quinone or similar compound as acceptor"/>
    <property type="evidence" value="ECO:0007669"/>
    <property type="project" value="InterPro"/>
</dbReference>
<dbReference type="Gene3D" id="3.40.50.360">
    <property type="match status" value="1"/>
</dbReference>
<dbReference type="HAMAP" id="MF_01216">
    <property type="entry name" value="Azoreductase_type1"/>
    <property type="match status" value="1"/>
</dbReference>
<dbReference type="InterPro" id="IPR003680">
    <property type="entry name" value="Flavodoxin_fold"/>
</dbReference>
<dbReference type="InterPro" id="IPR029039">
    <property type="entry name" value="Flavoprotein-like_sf"/>
</dbReference>
<dbReference type="InterPro" id="IPR050104">
    <property type="entry name" value="FMN-dep_NADH:Q_OxRdtase_AzoR1"/>
</dbReference>
<dbReference type="InterPro" id="IPR023048">
    <property type="entry name" value="NADH:quinone_OxRdtase_FMN_depd"/>
</dbReference>
<dbReference type="PANTHER" id="PTHR43741">
    <property type="entry name" value="FMN-DEPENDENT NADH-AZOREDUCTASE 1"/>
    <property type="match status" value="1"/>
</dbReference>
<dbReference type="PANTHER" id="PTHR43741:SF2">
    <property type="entry name" value="FMN-DEPENDENT NADH:QUINONE OXIDOREDUCTASE"/>
    <property type="match status" value="1"/>
</dbReference>
<dbReference type="Pfam" id="PF02525">
    <property type="entry name" value="Flavodoxin_2"/>
    <property type="match status" value="1"/>
</dbReference>
<dbReference type="SUPFAM" id="SSF52218">
    <property type="entry name" value="Flavoproteins"/>
    <property type="match status" value="1"/>
</dbReference>
<protein>
    <recommendedName>
        <fullName evidence="1">FMN-dependent NADH:quinone oxidoreductase 8</fullName>
        <ecNumber evidence="1">1.6.5.-</ecNumber>
    </recommendedName>
    <alternativeName>
        <fullName evidence="1">Azo-dye reductase 8</fullName>
    </alternativeName>
    <alternativeName>
        <fullName evidence="1">FMN-dependent NADH-azo compound oxidoreductase 8</fullName>
    </alternativeName>
    <alternativeName>
        <fullName evidence="1">FMN-dependent NADH-azoreductase 8</fullName>
        <ecNumber evidence="1">1.7.1.17</ecNumber>
    </alternativeName>
</protein>
<proteinExistence type="inferred from homology"/>